<evidence type="ECO:0000255" key="1"/>
<evidence type="ECO:0000255" key="2">
    <source>
        <dbReference type="PROSITE-ProRule" id="PRU01072"/>
    </source>
</evidence>
<evidence type="ECO:0000255" key="3">
    <source>
        <dbReference type="PROSITE-ProRule" id="PRU01073"/>
    </source>
</evidence>
<evidence type="ECO:0000305" key="4"/>
<accession>P55368</accession>
<keyword id="KW-0233">DNA recombination</keyword>
<keyword id="KW-0238">DNA-binding</keyword>
<keyword id="KW-0472">Membrane</keyword>
<keyword id="KW-0614">Plasmid</keyword>
<keyword id="KW-1185">Reference proteome</keyword>
<keyword id="KW-0812">Transmembrane</keyword>
<keyword id="KW-1133">Transmembrane helix</keyword>
<reference key="1">
    <citation type="journal article" date="1997" name="Nature">
        <title>Molecular basis of symbiosis between Rhizobium and legumes.</title>
        <authorList>
            <person name="Freiberg C.A."/>
            <person name="Fellay R."/>
            <person name="Bairoch A."/>
            <person name="Broughton W.J."/>
            <person name="Rosenthal A."/>
            <person name="Perret X."/>
        </authorList>
    </citation>
    <scope>NUCLEOTIDE SEQUENCE [LARGE SCALE GENOMIC DNA]</scope>
    <source>
        <strain>NBRC 101917 / NGR234</strain>
    </source>
</reference>
<reference key="2">
    <citation type="journal article" date="2009" name="Appl. Environ. Microbiol.">
        <title>Rhizobium sp. strain NGR234 possesses a remarkable number of secretion systems.</title>
        <authorList>
            <person name="Schmeisser C."/>
            <person name="Liesegang H."/>
            <person name="Krysciak D."/>
            <person name="Bakkou N."/>
            <person name="Le Quere A."/>
            <person name="Wollherr A."/>
            <person name="Heinemeyer I."/>
            <person name="Morgenstern B."/>
            <person name="Pommerening-Roeser A."/>
            <person name="Flores M."/>
            <person name="Palacios R."/>
            <person name="Brenner S."/>
            <person name="Gottschalk G."/>
            <person name="Schmitz R.A."/>
            <person name="Broughton W.J."/>
            <person name="Perret X."/>
            <person name="Strittmatter A.W."/>
            <person name="Streit W.R."/>
        </authorList>
    </citation>
    <scope>NUCLEOTIDE SEQUENCE [LARGE SCALE GENOMIC DNA]</scope>
    <source>
        <strain>NBRC 101917 / NGR234</strain>
    </source>
</reference>
<sequence>MSTDIAIKVDADHLRRDAFLYVRQSSLRQVFENTESTKRQYALRDRAVALGWPIERVHVIDSDLGLSGAQSQDRDGFQHLVSEVAMGHAGIVLGLEVSRLARNNADWHRLLELAALSRTLIMDEDGVYDPAYFNDRMLLGLKGTMSEAELHILKSRLQGGILNKARRGELEMPLPIGLVYTPDARVVLDPDRQIQDTVRLLFDTFRQTGSACAVVRRLRGEKILFPRRIRRGIGKGDVLWNEIDHSRVLQILHNPRYAGAFAYGRTRTAYNAKLKPVQLRVARSDWQVLIPDAHDGYISWAEYERNQAALEQNATGFSPGLRGRMPRQGSGLLQGRLLCGRCGARMRVHYEPFEGRLRPYYVCNEAVVRHAGKHCQWVRGAPVDEAVSALLLEVMAPAAIDVALAVQQEITQRVEQAAALRGTQLQRARYEAELARRRYLKVDPDNRLVADALEADWNARLRDLDALQREHERQNEADHSLLDEPAQQRIRALTADFPRIWNDERTGAVERKRMLGLLIEDVTLLVDDEVNINIRWRGGRTQSLSVARPRPMSVIRKTPAQVVALINELLEATNDRQIAARLNELGHRNWRGEPFTPKKVMLVRRTYGLKSRYERLREGGMLTGEEVAQQLGVCESTVHQLGRKGTLKRHRYASNHRYLYEPPGNVRLEKGAGSRYGGRQPRLIVAQPLQQGAS</sequence>
<proteinExistence type="predicted"/>
<protein>
    <recommendedName>
        <fullName>Uncharacterized protein y4bA/y4pH</fullName>
    </recommendedName>
</protein>
<organism>
    <name type="scientific">Sinorhizobium fredii (strain NBRC 101917 / NGR234)</name>
    <dbReference type="NCBI Taxonomy" id="394"/>
    <lineage>
        <taxon>Bacteria</taxon>
        <taxon>Pseudomonadati</taxon>
        <taxon>Pseudomonadota</taxon>
        <taxon>Alphaproteobacteria</taxon>
        <taxon>Hyphomicrobiales</taxon>
        <taxon>Rhizobiaceae</taxon>
        <taxon>Sinorhizobium/Ensifer group</taxon>
        <taxon>Sinorhizobium</taxon>
    </lineage>
</organism>
<geneLocation type="plasmid">
    <name>sym pNGR234a</name>
</geneLocation>
<gene>
    <name type="ordered locus">NGR_a00280</name>
    <name type="ORF">y4bA</name>
</gene>
<gene>
    <name type="ordered locus">NGR_a02040</name>
    <name type="ORF">y4pH</name>
</gene>
<name>Y4BA_SINFN</name>
<feature type="chain" id="PRO_0000200804" description="Uncharacterized protein y4bA/y4pH">
    <location>
        <begin position="1"/>
        <end position="694"/>
    </location>
</feature>
<feature type="transmembrane region" description="Helical" evidence="1">
    <location>
        <begin position="386"/>
        <end position="406"/>
    </location>
</feature>
<feature type="domain" description="Resolvase/invertase-type recombinase catalytic" evidence="2">
    <location>
        <begin position="17"/>
        <end position="168"/>
    </location>
</feature>
<feature type="DNA-binding region" description="Recombinase" evidence="3">
    <location>
        <begin position="175"/>
        <end position="316"/>
    </location>
</feature>
<feature type="active site" description="O-(5'-phospho-DNA)-serine intermediate" evidence="2">
    <location>
        <position position="25"/>
    </location>
</feature>
<comment type="subcellular location">
    <subcellularLocation>
        <location evidence="4">Membrane</location>
        <topology evidence="4">Single-pass membrane protein</topology>
    </subcellularLocation>
</comment>
<dbReference type="EMBL" id="U00090">
    <property type="protein sequence ID" value="AAB91617.1"/>
    <property type="molecule type" value="Genomic_DNA"/>
</dbReference>
<dbReference type="EMBL" id="U00090">
    <property type="protein sequence ID" value="AAB91818.1"/>
    <property type="molecule type" value="Genomic_DNA"/>
</dbReference>
<dbReference type="RefSeq" id="NP_443779.1">
    <property type="nucleotide sequence ID" value="NC_000914.2"/>
</dbReference>
<dbReference type="RefSeq" id="NP_444021.1">
    <property type="nucleotide sequence ID" value="NC_000914.2"/>
</dbReference>
<dbReference type="RefSeq" id="WP_010875070.1">
    <property type="nucleotide sequence ID" value="NC_000914.2"/>
</dbReference>
<dbReference type="RefSeq" id="YP_002822313.1">
    <property type="nucleotide sequence ID" value="NC_012586.1"/>
</dbReference>
<dbReference type="RefSeq" id="YP_002822373.1">
    <property type="nucleotide sequence ID" value="NC_012586.1"/>
</dbReference>
<dbReference type="RefSeq" id="YP_002823138.1">
    <property type="nucleotide sequence ID" value="NC_012586.1"/>
</dbReference>
<dbReference type="RefSeq" id="YP_002823201.1">
    <property type="nucleotide sequence ID" value="NC_012586.1"/>
</dbReference>
<dbReference type="RefSeq" id="YP_002823713.1">
    <property type="nucleotide sequence ID" value="NC_012586.1"/>
</dbReference>
<dbReference type="RefSeq" id="YP_002823883.1">
    <property type="nucleotide sequence ID" value="NC_012586.1"/>
</dbReference>
<dbReference type="RefSeq" id="YP_002826119.1">
    <property type="nucleotide sequence ID" value="NC_012587.1"/>
</dbReference>
<dbReference type="RefSeq" id="YP_002826760.1">
    <property type="nucleotide sequence ID" value="NC_012587.1"/>
</dbReference>
<dbReference type="STRING" id="394.NGR_c16000"/>
<dbReference type="KEGG" id="rhi:NGR_a00280"/>
<dbReference type="KEGG" id="rhi:NGR_a02040"/>
<dbReference type="eggNOG" id="COG1961">
    <property type="taxonomic scope" value="Bacteria"/>
</dbReference>
<dbReference type="HOGENOM" id="CLU_025318_2_0_5"/>
<dbReference type="OrthoDB" id="8282460at2"/>
<dbReference type="Proteomes" id="UP000001054">
    <property type="component" value="Plasmid pNGR234a"/>
</dbReference>
<dbReference type="GO" id="GO:0016020">
    <property type="term" value="C:membrane"/>
    <property type="evidence" value="ECO:0007669"/>
    <property type="project" value="UniProtKB-SubCell"/>
</dbReference>
<dbReference type="GO" id="GO:0003677">
    <property type="term" value="F:DNA binding"/>
    <property type="evidence" value="ECO:0007669"/>
    <property type="project" value="UniProtKB-KW"/>
</dbReference>
<dbReference type="GO" id="GO:0000150">
    <property type="term" value="F:DNA strand exchange activity"/>
    <property type="evidence" value="ECO:0007669"/>
    <property type="project" value="InterPro"/>
</dbReference>
<dbReference type="CDD" id="cd00338">
    <property type="entry name" value="Ser_Recombinase"/>
    <property type="match status" value="1"/>
</dbReference>
<dbReference type="Gene3D" id="3.90.1750.20">
    <property type="entry name" value="Putative Large Serine Recombinase, Chain B, Domain 2"/>
    <property type="match status" value="1"/>
</dbReference>
<dbReference type="Gene3D" id="3.40.50.1390">
    <property type="entry name" value="Resolvase, N-terminal catalytic domain"/>
    <property type="match status" value="1"/>
</dbReference>
<dbReference type="InterPro" id="IPR038109">
    <property type="entry name" value="DNA_bind_recomb_sf"/>
</dbReference>
<dbReference type="InterPro" id="IPR011109">
    <property type="entry name" value="DNA_bind_recombinase_dom"/>
</dbReference>
<dbReference type="InterPro" id="IPR006119">
    <property type="entry name" value="Resolv_N"/>
</dbReference>
<dbReference type="InterPro" id="IPR036162">
    <property type="entry name" value="Resolvase-like_N_sf"/>
</dbReference>
<dbReference type="InterPro" id="IPR050639">
    <property type="entry name" value="SSR_resolvase"/>
</dbReference>
<dbReference type="InterPro" id="IPR025827">
    <property type="entry name" value="Zn_ribbon_recom_dom"/>
</dbReference>
<dbReference type="PANTHER" id="PTHR30461:SF23">
    <property type="entry name" value="DNA RECOMBINASE-RELATED"/>
    <property type="match status" value="1"/>
</dbReference>
<dbReference type="PANTHER" id="PTHR30461">
    <property type="entry name" value="DNA-INVERTASE FROM LAMBDOID PROPHAGE"/>
    <property type="match status" value="1"/>
</dbReference>
<dbReference type="Pfam" id="PF07508">
    <property type="entry name" value="Recombinase"/>
    <property type="match status" value="1"/>
</dbReference>
<dbReference type="Pfam" id="PF00239">
    <property type="entry name" value="Resolvase"/>
    <property type="match status" value="1"/>
</dbReference>
<dbReference type="Pfam" id="PF13408">
    <property type="entry name" value="Zn_ribbon_recom"/>
    <property type="match status" value="1"/>
</dbReference>
<dbReference type="SMART" id="SM00857">
    <property type="entry name" value="Resolvase"/>
    <property type="match status" value="1"/>
</dbReference>
<dbReference type="SUPFAM" id="SSF53041">
    <property type="entry name" value="Resolvase-like"/>
    <property type="match status" value="1"/>
</dbReference>
<dbReference type="PROSITE" id="PS51737">
    <property type="entry name" value="RECOMBINASE_DNA_BIND"/>
    <property type="match status" value="1"/>
</dbReference>
<dbReference type="PROSITE" id="PS51736">
    <property type="entry name" value="RECOMBINASES_3"/>
    <property type="match status" value="1"/>
</dbReference>